<proteinExistence type="evidence at protein level"/>
<comment type="function">
    <text>Catalyzes the first step in hexosamine metabolism, converting fructose-6P into glucosamine-6P using glutamine as a nitrogen source.</text>
</comment>
<comment type="catalytic activity">
    <reaction>
        <text>D-fructose 6-phosphate + L-glutamine = D-glucosamine 6-phosphate + L-glutamate</text>
        <dbReference type="Rhea" id="RHEA:13237"/>
        <dbReference type="ChEBI" id="CHEBI:29985"/>
        <dbReference type="ChEBI" id="CHEBI:58359"/>
        <dbReference type="ChEBI" id="CHEBI:58725"/>
        <dbReference type="ChEBI" id="CHEBI:61527"/>
        <dbReference type="EC" id="2.6.1.16"/>
    </reaction>
</comment>
<comment type="subunit">
    <text evidence="5 7">Homodimer (Probable) (PubMed:9739095). In pull-down experiments interacts with CedA (PubMed:28818726).</text>
</comment>
<comment type="interaction">
    <interactant intactId="EBI-551022">
        <id>P17169</id>
    </interactant>
    <interactant intactId="EBI-562202">
        <id>P62615</id>
        <label>ispE</label>
    </interactant>
    <organismsDiffer>false</organismsDiffer>
    <experiments>2</experiments>
</comment>
<comment type="interaction">
    <interactant intactId="EBI-551022">
        <id>P17169</id>
    </interactant>
    <interactant intactId="EBI-551038">
        <id>P76093</id>
        <label>ynbD</label>
    </interactant>
    <organismsDiffer>false</organismsDiffer>
    <experiments>4</experiments>
</comment>
<comment type="subcellular location">
    <subcellularLocation>
        <location>Cytoplasm</location>
    </subcellularLocation>
</comment>
<comment type="induction">
    <text evidence="2 3 4">Post-transcriptionally regulated by the GlmY/GlmZ sRNA regulatory cascade. The sRNA GlmZ, together with Hfq, directly activates glmS mRNA translation through base-pairing. A second sRNA, GlmY, positively regulates glmS indirectly, by sequestering the adapter protein RapZ and protecting GlmZ from RNA cleavage.</text>
</comment>
<name>GLMS_ECOLI</name>
<organism>
    <name type="scientific">Escherichia coli (strain K12)</name>
    <dbReference type="NCBI Taxonomy" id="83333"/>
    <lineage>
        <taxon>Bacteria</taxon>
        <taxon>Pseudomonadati</taxon>
        <taxon>Pseudomonadota</taxon>
        <taxon>Gammaproteobacteria</taxon>
        <taxon>Enterobacterales</taxon>
        <taxon>Enterobacteriaceae</taxon>
        <taxon>Escherichia</taxon>
    </lineage>
</organism>
<feature type="initiator methionine" description="Removed">
    <location>
        <position position="1"/>
    </location>
</feature>
<feature type="chain" id="PRO_0000135328" description="Glutamine--fructose-6-phosphate aminotransferase [isomerizing]">
    <location>
        <begin position="2"/>
        <end position="609"/>
    </location>
</feature>
<feature type="domain" description="Glutamine amidotransferase type-2">
    <location>
        <begin position="2"/>
        <end position="218"/>
    </location>
</feature>
<feature type="domain" description="SIS 1">
    <location>
        <begin position="286"/>
        <end position="426"/>
    </location>
</feature>
<feature type="domain" description="SIS 2">
    <location>
        <begin position="458"/>
        <end position="599"/>
    </location>
</feature>
<feature type="active site" description="Nucleophile; for GATase activity" evidence="1">
    <location>
        <position position="2"/>
    </location>
</feature>
<feature type="active site" description="For Fru-6P isomerization activity">
    <location>
        <position position="604"/>
    </location>
</feature>
<feature type="sequence conflict" description="In Ref. 1; CAA25785." evidence="6" ref="1">
    <original>KL</original>
    <variation>NV</variation>
    <location>
        <begin position="419"/>
        <end position="420"/>
    </location>
</feature>
<feature type="strand" evidence="15">
    <location>
        <begin position="3"/>
        <end position="8"/>
    </location>
</feature>
<feature type="helix" evidence="15">
    <location>
        <begin position="14"/>
        <end position="24"/>
    </location>
</feature>
<feature type="helix" evidence="15">
    <location>
        <begin position="25"/>
        <end position="27"/>
    </location>
</feature>
<feature type="strand" evidence="15">
    <location>
        <begin position="30"/>
        <end position="37"/>
    </location>
</feature>
<feature type="strand" evidence="15">
    <location>
        <begin position="43"/>
        <end position="50"/>
    </location>
</feature>
<feature type="helix" evidence="15">
    <location>
        <begin position="52"/>
        <end position="61"/>
    </location>
</feature>
<feature type="strand" evidence="15">
    <location>
        <begin position="67"/>
        <end position="74"/>
    </location>
</feature>
<feature type="strand" evidence="15">
    <location>
        <begin position="77"/>
        <end position="79"/>
    </location>
</feature>
<feature type="turn" evidence="15">
    <location>
        <begin position="83"/>
        <end position="85"/>
    </location>
</feature>
<feature type="strand" evidence="15">
    <location>
        <begin position="89"/>
        <end position="91"/>
    </location>
</feature>
<feature type="strand" evidence="15">
    <location>
        <begin position="94"/>
        <end position="102"/>
    </location>
</feature>
<feature type="helix" evidence="15">
    <location>
        <begin position="105"/>
        <end position="114"/>
    </location>
</feature>
<feature type="helix" evidence="15">
    <location>
        <begin position="125"/>
        <end position="137"/>
    </location>
</feature>
<feature type="helix" evidence="15">
    <location>
        <begin position="142"/>
        <end position="149"/>
    </location>
</feature>
<feature type="helix" evidence="15">
    <location>
        <begin position="150"/>
        <end position="152"/>
    </location>
</feature>
<feature type="strand" evidence="15">
    <location>
        <begin position="155"/>
        <end position="163"/>
    </location>
</feature>
<feature type="strand" evidence="15">
    <location>
        <begin position="170"/>
        <end position="177"/>
    </location>
</feature>
<feature type="strand" evidence="15">
    <location>
        <begin position="180"/>
        <end position="183"/>
    </location>
</feature>
<feature type="strand" evidence="15">
    <location>
        <begin position="188"/>
        <end position="193"/>
    </location>
</feature>
<feature type="helix" evidence="15">
    <location>
        <begin position="194"/>
        <end position="196"/>
    </location>
</feature>
<feature type="turn" evidence="15">
    <location>
        <begin position="197"/>
        <end position="200"/>
    </location>
</feature>
<feature type="strand" evidence="15">
    <location>
        <begin position="202"/>
        <end position="206"/>
    </location>
</feature>
<feature type="strand" evidence="15">
    <location>
        <begin position="212"/>
        <end position="215"/>
    </location>
</feature>
<feature type="strand" evidence="15">
    <location>
        <begin position="220"/>
        <end position="223"/>
    </location>
</feature>
<feature type="strand" evidence="16">
    <location>
        <begin position="225"/>
        <end position="227"/>
    </location>
</feature>
<feature type="strand" evidence="15">
    <location>
        <begin position="234"/>
        <end position="236"/>
    </location>
</feature>
<feature type="turn" evidence="16">
    <location>
        <begin position="241"/>
        <end position="244"/>
    </location>
</feature>
<feature type="helix" evidence="13">
    <location>
        <begin position="252"/>
        <end position="258"/>
    </location>
</feature>
<feature type="helix" evidence="13">
    <location>
        <begin position="260"/>
        <end position="268"/>
    </location>
</feature>
<feature type="strand" evidence="13">
    <location>
        <begin position="271"/>
        <end position="273"/>
    </location>
</feature>
<feature type="strand" evidence="14">
    <location>
        <begin position="274"/>
        <end position="277"/>
    </location>
</feature>
<feature type="helix" evidence="13">
    <location>
        <begin position="280"/>
        <end position="282"/>
    </location>
</feature>
<feature type="helix" evidence="13">
    <location>
        <begin position="286"/>
        <end position="292"/>
    </location>
</feature>
<feature type="strand" evidence="13">
    <location>
        <begin position="295"/>
        <end position="300"/>
    </location>
</feature>
<feature type="helix" evidence="13">
    <location>
        <begin position="302"/>
        <end position="318"/>
    </location>
</feature>
<feature type="strand" evidence="13">
    <location>
        <begin position="323"/>
        <end position="327"/>
    </location>
</feature>
<feature type="helix" evidence="13">
    <location>
        <begin position="328"/>
        <end position="332"/>
    </location>
</feature>
<feature type="strand" evidence="13">
    <location>
        <begin position="342"/>
        <end position="351"/>
    </location>
</feature>
<feature type="helix" evidence="13">
    <location>
        <begin position="354"/>
        <end position="363"/>
    </location>
</feature>
<feature type="turn" evidence="13">
    <location>
        <begin position="364"/>
        <end position="367"/>
    </location>
</feature>
<feature type="strand" evidence="13">
    <location>
        <begin position="369"/>
        <end position="377"/>
    </location>
</feature>
<feature type="helix" evidence="13">
    <location>
        <begin position="381"/>
        <end position="385"/>
    </location>
</feature>
<feature type="strand" evidence="13">
    <location>
        <begin position="386"/>
        <end position="391"/>
    </location>
</feature>
<feature type="strand" evidence="13">
    <location>
        <begin position="399"/>
        <end position="401"/>
    </location>
</feature>
<feature type="helix" evidence="13">
    <location>
        <begin position="404"/>
        <end position="423"/>
    </location>
</feature>
<feature type="helix" evidence="13">
    <location>
        <begin position="428"/>
        <end position="448"/>
    </location>
</feature>
<feature type="helix" evidence="16">
    <location>
        <begin position="449"/>
        <end position="451"/>
    </location>
</feature>
<feature type="helix" evidence="13">
    <location>
        <begin position="454"/>
        <end position="462"/>
    </location>
</feature>
<feature type="strand" evidence="13">
    <location>
        <begin position="466"/>
        <end position="472"/>
    </location>
</feature>
<feature type="helix" evidence="13">
    <location>
        <begin position="474"/>
        <end position="476"/>
    </location>
</feature>
<feature type="helix" evidence="13">
    <location>
        <begin position="477"/>
        <end position="491"/>
    </location>
</feature>
<feature type="strand" evidence="13">
    <location>
        <begin position="494"/>
        <end position="499"/>
    </location>
</feature>
<feature type="helix" evidence="13">
    <location>
        <begin position="500"/>
        <end position="505"/>
    </location>
</feature>
<feature type="helix" evidence="13">
    <location>
        <begin position="507"/>
        <end position="510"/>
    </location>
</feature>
<feature type="strand" evidence="13">
    <location>
        <begin position="517"/>
        <end position="521"/>
    </location>
</feature>
<feature type="helix" evidence="13">
    <location>
        <begin position="524"/>
        <end position="536"/>
    </location>
</feature>
<feature type="helix" evidence="13">
    <location>
        <begin position="537"/>
        <end position="540"/>
    </location>
</feature>
<feature type="strand" evidence="13">
    <location>
        <begin position="544"/>
        <end position="549"/>
    </location>
</feature>
<feature type="helix" evidence="13">
    <location>
        <begin position="550"/>
        <end position="552"/>
    </location>
</feature>
<feature type="strand" evidence="13">
    <location>
        <begin position="560"/>
        <end position="565"/>
    </location>
</feature>
<feature type="helix" evidence="13">
    <location>
        <begin position="570"/>
        <end position="572"/>
    </location>
</feature>
<feature type="helix" evidence="13">
    <location>
        <begin position="573"/>
        <end position="592"/>
    </location>
</feature>
<feature type="strand" evidence="13">
    <location>
        <begin position="596"/>
        <end position="598"/>
    </location>
</feature>
<protein>
    <recommendedName>
        <fullName>Glutamine--fructose-6-phosphate aminotransferase [isomerizing]</fullName>
        <ecNumber>2.6.1.16</ecNumber>
    </recommendedName>
    <alternativeName>
        <fullName>D-fructose-6-phosphate amidotransferase</fullName>
    </alternativeName>
    <alternativeName>
        <fullName>GFAT</fullName>
    </alternativeName>
    <alternativeName>
        <fullName>Glucosamine-6-phosphate synthase</fullName>
    </alternativeName>
    <alternativeName>
        <fullName>Hexosephosphate aminotransferase</fullName>
    </alternativeName>
    <alternativeName>
        <fullName>L-glutamine--D-fructose-6-phosphate amidotransferase</fullName>
    </alternativeName>
</protein>
<gene>
    <name type="primary">glmS</name>
    <name type="ordered locus">b3729</name>
    <name type="ordered locus">JW3707</name>
</gene>
<dbReference type="EC" id="2.6.1.16"/>
<dbReference type="EMBL" id="X01631">
    <property type="protein sequence ID" value="CAA25785.1"/>
    <property type="molecule type" value="Genomic_DNA"/>
</dbReference>
<dbReference type="EMBL" id="L10328">
    <property type="protein sequence ID" value="AAA62080.1"/>
    <property type="molecule type" value="Genomic_DNA"/>
</dbReference>
<dbReference type="EMBL" id="U00096">
    <property type="protein sequence ID" value="AAC76752.1"/>
    <property type="molecule type" value="Genomic_DNA"/>
</dbReference>
<dbReference type="EMBL" id="AP009048">
    <property type="protein sequence ID" value="BAE77559.1"/>
    <property type="molecule type" value="Genomic_DNA"/>
</dbReference>
<dbReference type="EMBL" id="V00620">
    <property type="protein sequence ID" value="CAA23894.1"/>
    <property type="molecule type" value="Genomic_DNA"/>
</dbReference>
<dbReference type="EMBL" id="M18980">
    <property type="protein sequence ID" value="AAA23836.1"/>
    <property type="molecule type" value="Genomic_DNA"/>
</dbReference>
<dbReference type="PIR" id="B65176">
    <property type="entry name" value="XNECGM"/>
</dbReference>
<dbReference type="RefSeq" id="NP_418185.1">
    <property type="nucleotide sequence ID" value="NC_000913.3"/>
</dbReference>
<dbReference type="RefSeq" id="WP_000334099.1">
    <property type="nucleotide sequence ID" value="NZ_SSZK01000036.1"/>
</dbReference>
<dbReference type="PDB" id="1JXA">
    <property type="method" value="X-ray"/>
    <property type="resolution" value="3.10 A"/>
    <property type="chains" value="A/B/C=2-609"/>
</dbReference>
<dbReference type="PDB" id="1MOQ">
    <property type="method" value="X-ray"/>
    <property type="resolution" value="1.57 A"/>
    <property type="chains" value="A=242-609"/>
</dbReference>
<dbReference type="PDB" id="1MOR">
    <property type="method" value="X-ray"/>
    <property type="resolution" value="1.90 A"/>
    <property type="chains" value="A=242-609"/>
</dbReference>
<dbReference type="PDB" id="1MOS">
    <property type="method" value="X-ray"/>
    <property type="resolution" value="2.00 A"/>
    <property type="chains" value="A=242-609"/>
</dbReference>
<dbReference type="PDB" id="1XFF">
    <property type="method" value="X-ray"/>
    <property type="resolution" value="1.80 A"/>
    <property type="chains" value="A/B=2-241"/>
</dbReference>
<dbReference type="PDB" id="1XFG">
    <property type="method" value="X-ray"/>
    <property type="resolution" value="1.85 A"/>
    <property type="chains" value="A/B=2-241"/>
</dbReference>
<dbReference type="PDB" id="2J6H">
    <property type="method" value="X-ray"/>
    <property type="resolution" value="2.35 A"/>
    <property type="chains" value="A/B=2-609"/>
</dbReference>
<dbReference type="PDB" id="2VF4">
    <property type="method" value="X-ray"/>
    <property type="resolution" value="2.95 A"/>
    <property type="chains" value="X=2-609"/>
</dbReference>
<dbReference type="PDB" id="2VF5">
    <property type="method" value="X-ray"/>
    <property type="resolution" value="2.90 A"/>
    <property type="chains" value="X=2-609"/>
</dbReference>
<dbReference type="PDB" id="3OOJ">
    <property type="method" value="X-ray"/>
    <property type="resolution" value="2.50 A"/>
    <property type="chains" value="A/B/C/D/E/F/G/H=3-609"/>
</dbReference>
<dbReference type="PDB" id="4AMV">
    <property type="method" value="X-ray"/>
    <property type="resolution" value="2.05 A"/>
    <property type="chains" value="A/B/C=1-609"/>
</dbReference>
<dbReference type="PDB" id="7DNR">
    <property type="method" value="X-ray"/>
    <property type="resolution" value="1.70 A"/>
    <property type="chains" value="A/B=242-609"/>
</dbReference>
<dbReference type="PDBsum" id="1JXA"/>
<dbReference type="PDBsum" id="1MOQ"/>
<dbReference type="PDBsum" id="1MOR"/>
<dbReference type="PDBsum" id="1MOS"/>
<dbReference type="PDBsum" id="1XFF"/>
<dbReference type="PDBsum" id="1XFG"/>
<dbReference type="PDBsum" id="2J6H"/>
<dbReference type="PDBsum" id="2VF4"/>
<dbReference type="PDBsum" id="2VF5"/>
<dbReference type="PDBsum" id="3OOJ"/>
<dbReference type="PDBsum" id="4AMV"/>
<dbReference type="PDBsum" id="7DNR"/>
<dbReference type="SMR" id="P17169"/>
<dbReference type="BioGRID" id="4262136">
    <property type="interactions" value="528"/>
</dbReference>
<dbReference type="BioGRID" id="852543">
    <property type="interactions" value="1"/>
</dbReference>
<dbReference type="DIP" id="DIP-9775N"/>
<dbReference type="FunCoup" id="P17169">
    <property type="interactions" value="690"/>
</dbReference>
<dbReference type="IntAct" id="P17169">
    <property type="interactions" value="8"/>
</dbReference>
<dbReference type="STRING" id="511145.b3729"/>
<dbReference type="BindingDB" id="P17169"/>
<dbReference type="DrugBank" id="DB03814">
    <property type="generic name" value="2-(N-morpholino)ethanesulfonic acid"/>
</dbReference>
<dbReference type="DrugBank" id="DB02445">
    <property type="generic name" value="2-Deoxy-2-Amino Glucitol-6-Phosphate"/>
</dbReference>
<dbReference type="DrugBank" id="DB14511">
    <property type="generic name" value="Acetate"/>
</dbReference>
<dbReference type="DrugBank" id="DB02007">
    <property type="generic name" value="alpha-D-glucose 6-phosphate"/>
</dbReference>
<dbReference type="DrugBank" id="DB02657">
    <property type="generic name" value="Glucosamine 6-Phosphate"/>
</dbReference>
<dbReference type="DrugBank" id="DB03581">
    <property type="generic name" value="Glucose-6-Phosphate"/>
</dbReference>
<dbReference type="DrugBank" id="DB02446">
    <property type="generic name" value="Glutamine hydroxamate"/>
</dbReference>
<dbReference type="MEROPS" id="C44.971"/>
<dbReference type="jPOST" id="P17169"/>
<dbReference type="PaxDb" id="511145-b3729"/>
<dbReference type="EnsemblBacteria" id="AAC76752">
    <property type="protein sequence ID" value="AAC76752"/>
    <property type="gene ID" value="b3729"/>
</dbReference>
<dbReference type="GeneID" id="75173963"/>
<dbReference type="GeneID" id="948241"/>
<dbReference type="KEGG" id="ecj:JW3707"/>
<dbReference type="KEGG" id="eco:b3729"/>
<dbReference type="PATRIC" id="fig|1411691.4.peg.2971"/>
<dbReference type="EchoBASE" id="EB0377"/>
<dbReference type="eggNOG" id="COG0449">
    <property type="taxonomic scope" value="Bacteria"/>
</dbReference>
<dbReference type="HOGENOM" id="CLU_012520_5_2_6"/>
<dbReference type="InParanoid" id="P17169"/>
<dbReference type="OMA" id="ASEYRYA"/>
<dbReference type="OrthoDB" id="9761808at2"/>
<dbReference type="PhylomeDB" id="P17169"/>
<dbReference type="BioCyc" id="EcoCyc:L-GLN-FRUCT-6-P-AMINOTRANS-MONOMER"/>
<dbReference type="BioCyc" id="MetaCyc:L-GLN-FRUCT-6-P-AMINOTRANS-MONOMER"/>
<dbReference type="BRENDA" id="2.6.1.16">
    <property type="organism ID" value="2026"/>
</dbReference>
<dbReference type="SABIO-RK" id="P17169"/>
<dbReference type="EvolutionaryTrace" id="P17169"/>
<dbReference type="PRO" id="PR:P17169"/>
<dbReference type="Proteomes" id="UP000000625">
    <property type="component" value="Chromosome"/>
</dbReference>
<dbReference type="GO" id="GO:0005829">
    <property type="term" value="C:cytosol"/>
    <property type="evidence" value="ECO:0000314"/>
    <property type="project" value="EcoCyc"/>
</dbReference>
<dbReference type="GO" id="GO:0097367">
    <property type="term" value="F:carbohydrate derivative binding"/>
    <property type="evidence" value="ECO:0007669"/>
    <property type="project" value="InterPro"/>
</dbReference>
<dbReference type="GO" id="GO:0004360">
    <property type="term" value="F:glutamine-fructose-6-phosphate transaminase (isomerizing) activity"/>
    <property type="evidence" value="ECO:0000314"/>
    <property type="project" value="EcoCyc"/>
</dbReference>
<dbReference type="GO" id="GO:0005975">
    <property type="term" value="P:carbohydrate metabolic process"/>
    <property type="evidence" value="ECO:0007669"/>
    <property type="project" value="UniProtKB-UniRule"/>
</dbReference>
<dbReference type="GO" id="GO:0006002">
    <property type="term" value="P:fructose 6-phosphate metabolic process"/>
    <property type="evidence" value="ECO:0000318"/>
    <property type="project" value="GO_Central"/>
</dbReference>
<dbReference type="GO" id="GO:0006487">
    <property type="term" value="P:protein N-linked glycosylation"/>
    <property type="evidence" value="ECO:0000318"/>
    <property type="project" value="GO_Central"/>
</dbReference>
<dbReference type="GO" id="GO:0006048">
    <property type="term" value="P:UDP-N-acetylglucosamine biosynthetic process"/>
    <property type="evidence" value="ECO:0000315"/>
    <property type="project" value="EcoCyc"/>
</dbReference>
<dbReference type="GO" id="GO:0006047">
    <property type="term" value="P:UDP-N-acetylglucosamine metabolic process"/>
    <property type="evidence" value="ECO:0000318"/>
    <property type="project" value="GO_Central"/>
</dbReference>
<dbReference type="CDD" id="cd00714">
    <property type="entry name" value="GFAT"/>
    <property type="match status" value="1"/>
</dbReference>
<dbReference type="CDD" id="cd05008">
    <property type="entry name" value="SIS_GlmS_GlmD_1"/>
    <property type="match status" value="1"/>
</dbReference>
<dbReference type="CDD" id="cd05009">
    <property type="entry name" value="SIS_GlmS_GlmD_2"/>
    <property type="match status" value="1"/>
</dbReference>
<dbReference type="FunFam" id="3.40.50.10490:FF:000001">
    <property type="entry name" value="Glutamine--fructose-6-phosphate aminotransferase [isomerizing]"/>
    <property type="match status" value="1"/>
</dbReference>
<dbReference type="FunFam" id="3.40.50.10490:FF:000002">
    <property type="entry name" value="Glutamine--fructose-6-phosphate aminotransferase [isomerizing]"/>
    <property type="match status" value="1"/>
</dbReference>
<dbReference type="FunFam" id="3.60.20.10:FF:000006">
    <property type="entry name" value="Glutamine--fructose-6-phosphate aminotransferase [isomerizing]"/>
    <property type="match status" value="1"/>
</dbReference>
<dbReference type="Gene3D" id="3.40.50.10490">
    <property type="entry name" value="Glucose-6-phosphate isomerase like protein, domain 1"/>
    <property type="match status" value="2"/>
</dbReference>
<dbReference type="Gene3D" id="3.60.20.10">
    <property type="entry name" value="Glutamine Phosphoribosylpyrophosphate, subunit 1, domain 1"/>
    <property type="match status" value="1"/>
</dbReference>
<dbReference type="HAMAP" id="MF_00164">
    <property type="entry name" value="GlmS"/>
    <property type="match status" value="1"/>
</dbReference>
<dbReference type="InterPro" id="IPR017932">
    <property type="entry name" value="GATase_2_dom"/>
</dbReference>
<dbReference type="InterPro" id="IPR005855">
    <property type="entry name" value="GFAT"/>
</dbReference>
<dbReference type="InterPro" id="IPR047084">
    <property type="entry name" value="GFAT_N"/>
</dbReference>
<dbReference type="InterPro" id="IPR035466">
    <property type="entry name" value="GlmS/AgaS_SIS"/>
</dbReference>
<dbReference type="InterPro" id="IPR035490">
    <property type="entry name" value="GlmS/FrlB_SIS"/>
</dbReference>
<dbReference type="InterPro" id="IPR029055">
    <property type="entry name" value="Ntn_hydrolases_N"/>
</dbReference>
<dbReference type="InterPro" id="IPR001347">
    <property type="entry name" value="SIS_dom"/>
</dbReference>
<dbReference type="InterPro" id="IPR046348">
    <property type="entry name" value="SIS_dom_sf"/>
</dbReference>
<dbReference type="NCBIfam" id="TIGR01135">
    <property type="entry name" value="glmS"/>
    <property type="match status" value="1"/>
</dbReference>
<dbReference type="NCBIfam" id="NF001484">
    <property type="entry name" value="PRK00331.1"/>
    <property type="match status" value="1"/>
</dbReference>
<dbReference type="PANTHER" id="PTHR10937">
    <property type="entry name" value="GLUCOSAMINE--FRUCTOSE-6-PHOSPHATE AMINOTRANSFERASE, ISOMERIZING"/>
    <property type="match status" value="1"/>
</dbReference>
<dbReference type="PANTHER" id="PTHR10937:SF0">
    <property type="entry name" value="GLUTAMINE--FRUCTOSE-6-PHOSPHATE TRANSAMINASE (ISOMERIZING)"/>
    <property type="match status" value="1"/>
</dbReference>
<dbReference type="Pfam" id="PF13522">
    <property type="entry name" value="GATase_6"/>
    <property type="match status" value="1"/>
</dbReference>
<dbReference type="Pfam" id="PF01380">
    <property type="entry name" value="SIS"/>
    <property type="match status" value="2"/>
</dbReference>
<dbReference type="SUPFAM" id="SSF56235">
    <property type="entry name" value="N-terminal nucleophile aminohydrolases (Ntn hydrolases)"/>
    <property type="match status" value="1"/>
</dbReference>
<dbReference type="SUPFAM" id="SSF53697">
    <property type="entry name" value="SIS domain"/>
    <property type="match status" value="1"/>
</dbReference>
<dbReference type="PROSITE" id="PS51278">
    <property type="entry name" value="GATASE_TYPE_2"/>
    <property type="match status" value="1"/>
</dbReference>
<dbReference type="PROSITE" id="PS51464">
    <property type="entry name" value="SIS"/>
    <property type="match status" value="2"/>
</dbReference>
<reference key="1">
    <citation type="journal article" date="1984" name="Biochem. J.">
        <title>DNA sequence around the Escherichia coli unc operon. Completion of the sequence of a 17 kilobase segment containing asnA, oriC, unc, glmS and phoS.</title>
        <authorList>
            <person name="Walker J.E."/>
            <person name="Gay N.J."/>
            <person name="Saraste M."/>
            <person name="Eberle A.N."/>
        </authorList>
    </citation>
    <scope>NUCLEOTIDE SEQUENCE [GENOMIC DNA]</scope>
</reference>
<reference key="2">
    <citation type="journal article" date="1993" name="Genomics">
        <title>DNA sequence and analysis of 136 kilobases of the Escherichia coli genome: organizational symmetry around the origin of replication.</title>
        <authorList>
            <person name="Burland V.D."/>
            <person name="Plunkett G. III"/>
            <person name="Daniels D.L."/>
            <person name="Blattner F.R."/>
        </authorList>
    </citation>
    <scope>NUCLEOTIDE SEQUENCE [LARGE SCALE GENOMIC DNA]</scope>
    <source>
        <strain>K12 / MG1655 / ATCC 47076</strain>
    </source>
</reference>
<reference key="3">
    <citation type="journal article" date="1997" name="Science">
        <title>The complete genome sequence of Escherichia coli K-12.</title>
        <authorList>
            <person name="Blattner F.R."/>
            <person name="Plunkett G. III"/>
            <person name="Bloch C.A."/>
            <person name="Perna N.T."/>
            <person name="Burland V."/>
            <person name="Riley M."/>
            <person name="Collado-Vides J."/>
            <person name="Glasner J.D."/>
            <person name="Rode C.K."/>
            <person name="Mayhew G.F."/>
            <person name="Gregor J."/>
            <person name="Davis N.W."/>
            <person name="Kirkpatrick H.A."/>
            <person name="Goeden M.A."/>
            <person name="Rose D.J."/>
            <person name="Mau B."/>
            <person name="Shao Y."/>
        </authorList>
    </citation>
    <scope>NUCLEOTIDE SEQUENCE [LARGE SCALE GENOMIC DNA]</scope>
    <source>
        <strain>K12 / MG1655 / ATCC 47076</strain>
    </source>
</reference>
<reference key="4">
    <citation type="journal article" date="2006" name="Mol. Syst. Biol.">
        <title>Highly accurate genome sequences of Escherichia coli K-12 strains MG1655 and W3110.</title>
        <authorList>
            <person name="Hayashi K."/>
            <person name="Morooka N."/>
            <person name="Yamamoto Y."/>
            <person name="Fujita K."/>
            <person name="Isono K."/>
            <person name="Choi S."/>
            <person name="Ohtsubo E."/>
            <person name="Baba T."/>
            <person name="Wanner B.L."/>
            <person name="Mori H."/>
            <person name="Horiuchi T."/>
        </authorList>
    </citation>
    <scope>NUCLEOTIDE SEQUENCE [LARGE SCALE GENOMIC DNA]</scope>
    <source>
        <strain>K12 / W3110 / ATCC 27325 / DSM 5911</strain>
    </source>
</reference>
<reference key="5">
    <citation type="journal article" date="1991" name="Eur. J. Biochem.">
        <title>Possible involvement of Lys603 from Escherichia coli glucosamine-6-phosphate synthase in the binding of its substrate fructose 6-phosphate.</title>
        <authorList>
            <person name="Golinelli-Pimpaneau B."/>
            <person name="Badet B."/>
        </authorList>
    </citation>
    <scope>PROTEIN SEQUENCE OF 49-52; 219-231; 489-493; 505-508 AND 601-609</scope>
</reference>
<reference key="6">
    <citation type="journal article" date="1982" name="Nature">
        <title>Unique insertion site of Tn7 in the E. coli chromosome.</title>
        <authorList>
            <person name="Lichtenstein C."/>
            <person name="Brenner S."/>
        </authorList>
    </citation>
    <scope>NUCLEOTIDE SEQUENCE [GENOMIC DNA] OF 490-609</scope>
</reference>
<reference key="7">
    <citation type="journal article" date="1986" name="Biochem. J.">
        <title>Insertion of transposon Tn7 into the Escherichia coli glmS transcriptional terminator.</title>
        <authorList>
            <person name="Gay N.J."/>
            <person name="Tybulewicz V.L.J."/>
            <person name="Walker J.E."/>
        </authorList>
    </citation>
    <scope>NUCLEOTIDE SEQUENCE [GENOMIC DNA] OF 607-609</scope>
</reference>
<reference key="8">
    <citation type="journal article" date="1988" name="J. Bacteriol.">
        <title>Sequence requirements of Escherichia coli attTn7, a specific site of transposon Tn7 insertion.</title>
        <authorList>
            <person name="McKown R.L."/>
            <person name="Orle K.A."/>
            <person name="Chen T."/>
            <person name="Craig N.L."/>
        </authorList>
    </citation>
    <scope>NUCLEOTIDE SEQUENCE [GENOMIC DNA] OF 597-609</scope>
</reference>
<reference key="9">
    <citation type="journal article" date="1988" name="Biochimie">
        <title>Molecular cloning and overexpression of the glucosamine synthetase gene from Escherichia coli.</title>
        <authorList>
            <person name="Dutka-Malen S."/>
            <person name="Mazodier P."/>
            <person name="Badet B."/>
        </authorList>
    </citation>
    <scope>CHARACTERIZATION</scope>
</reference>
<reference key="10">
    <citation type="journal article" date="2008" name="Nucleic Acids Res.">
        <title>The small RNA GlmY acts upstream of the sRNA GlmZ in the activation of glmS expression and is subject to regulation by polyadenylation in Escherichia coli.</title>
        <authorList>
            <person name="Reichenbach B."/>
            <person name="Maes A."/>
            <person name="Kalamorz F."/>
            <person name="Hajnsdorf E."/>
            <person name="Goerke B."/>
        </authorList>
    </citation>
    <scope>REGULATION BY THE GLMYZ CASCADE</scope>
</reference>
<reference key="11">
    <citation type="journal article" date="2008" name="PLoS Biol.">
        <title>Two seemingly homologous noncoding RNAs act hierarchically to activate glmS mRNA translation.</title>
        <authorList>
            <person name="Urban J.H."/>
            <person name="Vogel J."/>
        </authorList>
    </citation>
    <scope>REGULATION BY THE GLMYZ CASCADE</scope>
    <source>
        <strain>K12 / MC4100 / ATCC 35695 / DSM 6574</strain>
    </source>
</reference>
<reference key="12">
    <citation type="journal article" date="2013" name="Genes Dev.">
        <title>Targeted decay of a regulatory small RNA by an adaptor protein for RNase E and counteraction by an anti-adaptor RNA.</title>
        <authorList>
            <person name="Gopel Y."/>
            <person name="Papenfort K."/>
            <person name="Reichenbach B."/>
            <person name="Vogel J."/>
            <person name="Gorke B."/>
        </authorList>
    </citation>
    <scope>REGULATION BY THE GLMYZ CASCADE</scope>
</reference>
<reference key="13">
    <citation type="journal article" date="2018" name="Int. J. Biol. Macromol.">
        <title>Identification of functional interactome of a key cell division regulatory protein CedA of E.coli.</title>
        <authorList>
            <person name="Sharma P."/>
            <person name="Tomar A.K."/>
            <person name="Kundu B."/>
        </authorList>
    </citation>
    <scope>INTERACTION WITH CEDA</scope>
</reference>
<reference evidence="11 12" key="14">
    <citation type="journal article" date="1996" name="Structure">
        <title>Substrate binding is required for assembly of the active conformation of the catalytic site in Ntn amidotransferases: evidence from the 1.8-A crystal structure of the glutaminase domain of glucosamine 6-phosphate synthase.</title>
        <authorList>
            <person name="Isupov M.N."/>
            <person name="Obmolova G."/>
            <person name="Butterworth S."/>
            <person name="Badet-Denisot M.-A."/>
            <person name="Badet B."/>
            <person name="Polikarpov I."/>
            <person name="Littlechild J.A."/>
            <person name="Teplyakov A."/>
        </authorList>
    </citation>
    <scope>X-RAY CRYSTALLOGRAPHY (1.8 ANGSTROMS) OF 1-241</scope>
</reference>
<reference evidence="8" key="15">
    <citation type="journal article" date="1998" name="Structure">
        <title>Involvement of the C-terminus in intramolecular nitrogen channeling in glucosamine 6-phosphate synthase: evidence from a 1.6-A crystal structure of the isomerase domain.</title>
        <authorList>
            <person name="Teplyakov A."/>
            <person name="Obmolova G."/>
            <person name="Badet-Denisot M.-A."/>
            <person name="Badet B."/>
            <person name="Polikarpov I."/>
        </authorList>
    </citation>
    <scope>X-RAY CRYSTALLOGRAPHY (1.57 ANGSTROMS) OF 244-609</scope>
</reference>
<reference evidence="9 10" key="16">
    <citation type="journal article" date="1999" name="Protein Sci.">
        <title>The mechanism of sugar phosphate isomerization by glucosamine 6-phosphate synthase.</title>
        <authorList>
            <person name="Teplyakov A."/>
            <person name="Obmolova G."/>
            <person name="Badet-Denisot M.-A."/>
            <person name="Badet B."/>
        </authorList>
    </citation>
    <scope>X-RAY CRYSTALLOGRAPHY (2.0 ANGSTROMS) OF 242-609</scope>
</reference>
<evidence type="ECO:0000250" key="1"/>
<evidence type="ECO:0000269" key="2">
    <source>
    </source>
</evidence>
<evidence type="ECO:0000269" key="3">
    <source>
    </source>
</evidence>
<evidence type="ECO:0000269" key="4">
    <source>
    </source>
</evidence>
<evidence type="ECO:0000269" key="5">
    <source>
    </source>
</evidence>
<evidence type="ECO:0000305" key="6"/>
<evidence type="ECO:0000305" key="7">
    <source>
    </source>
</evidence>
<evidence type="ECO:0007744" key="8">
    <source>
        <dbReference type="PDB" id="1MOQ"/>
    </source>
</evidence>
<evidence type="ECO:0007744" key="9">
    <source>
        <dbReference type="PDB" id="1MOR"/>
    </source>
</evidence>
<evidence type="ECO:0007744" key="10">
    <source>
        <dbReference type="PDB" id="1MOS"/>
    </source>
</evidence>
<evidence type="ECO:0007744" key="11">
    <source>
        <dbReference type="PDB" id="1XFF"/>
    </source>
</evidence>
<evidence type="ECO:0007744" key="12">
    <source>
        <dbReference type="PDB" id="1XFG"/>
    </source>
</evidence>
<evidence type="ECO:0007829" key="13">
    <source>
        <dbReference type="PDB" id="1MOQ"/>
    </source>
</evidence>
<evidence type="ECO:0007829" key="14">
    <source>
        <dbReference type="PDB" id="1MOR"/>
    </source>
</evidence>
<evidence type="ECO:0007829" key="15">
    <source>
        <dbReference type="PDB" id="1XFF"/>
    </source>
</evidence>
<evidence type="ECO:0007829" key="16">
    <source>
        <dbReference type="PDB" id="4AMV"/>
    </source>
</evidence>
<keyword id="KW-0002">3D-structure</keyword>
<keyword id="KW-0032">Aminotransferase</keyword>
<keyword id="KW-0963">Cytoplasm</keyword>
<keyword id="KW-0903">Direct protein sequencing</keyword>
<keyword id="KW-0315">Glutamine amidotransferase</keyword>
<keyword id="KW-1185">Reference proteome</keyword>
<keyword id="KW-0677">Repeat</keyword>
<keyword id="KW-0808">Transferase</keyword>
<accession>P17169</accession>
<accession>P76745</accession>
<accession>Q2M847</accession>
<sequence length="609" mass="66894">MCGIVGAIAQRDVAEILLEGLRRLEYRGYDSAGLAVVDAEGHMTRLRRLGKVQMLAQAAEEHPLHGGTGIAHTRWATHGEPSEVNAHPHVSEHIVVVHNGIIENHEPLREELKARGYTFVSETDTEVIAHLVNWELKQGGTLREAVLRAIPQLRGAYGTVIMDSRHPDTLLAARSGSPLVIGLGMGENFIASDQLALLPVTRRFIFLEEGDIAEITRRSVNIFDKTGAEVKRQDIESNLQYDAGDKGIYRHYMQKEIYEQPNAIKNTLTGRISHGQVDLSELGPNADELLSKVEHIQILACGTSYNSGMVSRYWFESLAGIPCDVEIASEFRYRKSAVRRNSLMITLSQSGETADTLAGLRLSKELGYLGSLAICNVPGSSLVRESDLALMTNAGTEIGVASTKAFTTQLTVLLMLVAKLSRLKGLDASIEHDIVHGLQALPSRIEQMLSQDKRIEALAEDFSDKHHALFLGRGDQYPIALEGALKLKEISYIHAEAYAAGELKHGPLALIDADMPVIVVAPNNELLEKLKSNIEEVRARGGQLYVFADQDAGFVSSDNMHIIEMPHVEEVIAPIFYTVPLQLLAYHVALIKGTDVDQPRNLAKSVTVE</sequence>